<feature type="chain" id="PRO_1000195015" description="Ribosomal RNA large subunit methyltransferase E">
    <location>
        <begin position="1"/>
        <end position="208"/>
    </location>
</feature>
<feature type="active site" description="Proton acceptor" evidence="1">
    <location>
        <position position="164"/>
    </location>
</feature>
<feature type="binding site" evidence="1">
    <location>
        <position position="63"/>
    </location>
    <ligand>
        <name>S-adenosyl-L-methionine</name>
        <dbReference type="ChEBI" id="CHEBI:59789"/>
    </ligand>
</feature>
<feature type="binding site" evidence="1">
    <location>
        <position position="65"/>
    </location>
    <ligand>
        <name>S-adenosyl-L-methionine</name>
        <dbReference type="ChEBI" id="CHEBI:59789"/>
    </ligand>
</feature>
<feature type="binding site" evidence="1">
    <location>
        <position position="83"/>
    </location>
    <ligand>
        <name>S-adenosyl-L-methionine</name>
        <dbReference type="ChEBI" id="CHEBI:59789"/>
    </ligand>
</feature>
<feature type="binding site" evidence="1">
    <location>
        <position position="99"/>
    </location>
    <ligand>
        <name>S-adenosyl-L-methionine</name>
        <dbReference type="ChEBI" id="CHEBI:59789"/>
    </ligand>
</feature>
<feature type="binding site" evidence="1">
    <location>
        <position position="124"/>
    </location>
    <ligand>
        <name>S-adenosyl-L-methionine</name>
        <dbReference type="ChEBI" id="CHEBI:59789"/>
    </ligand>
</feature>
<comment type="function">
    <text evidence="1">Specifically methylates the uridine in position 2552 of 23S rRNA at the 2'-O position of the ribose in the fully assembled 50S ribosomal subunit.</text>
</comment>
<comment type="catalytic activity">
    <reaction evidence="1">
        <text>uridine(2552) in 23S rRNA + S-adenosyl-L-methionine = 2'-O-methyluridine(2552) in 23S rRNA + S-adenosyl-L-homocysteine + H(+)</text>
        <dbReference type="Rhea" id="RHEA:42720"/>
        <dbReference type="Rhea" id="RHEA-COMP:10202"/>
        <dbReference type="Rhea" id="RHEA-COMP:10203"/>
        <dbReference type="ChEBI" id="CHEBI:15378"/>
        <dbReference type="ChEBI" id="CHEBI:57856"/>
        <dbReference type="ChEBI" id="CHEBI:59789"/>
        <dbReference type="ChEBI" id="CHEBI:65315"/>
        <dbReference type="ChEBI" id="CHEBI:74478"/>
        <dbReference type="EC" id="2.1.1.166"/>
    </reaction>
</comment>
<comment type="subcellular location">
    <subcellularLocation>
        <location evidence="1">Cytoplasm</location>
    </subcellularLocation>
</comment>
<comment type="similarity">
    <text evidence="1">Belongs to the class I-like SAM-binding methyltransferase superfamily. RNA methyltransferase RlmE family.</text>
</comment>
<proteinExistence type="inferred from homology"/>
<name>RLME_SALG2</name>
<keyword id="KW-0963">Cytoplasm</keyword>
<keyword id="KW-0489">Methyltransferase</keyword>
<keyword id="KW-0698">rRNA processing</keyword>
<keyword id="KW-0949">S-adenosyl-L-methionine</keyword>
<keyword id="KW-0808">Transferase</keyword>
<dbReference type="EC" id="2.1.1.166" evidence="1"/>
<dbReference type="EMBL" id="AM933173">
    <property type="protein sequence ID" value="CAR38985.1"/>
    <property type="molecule type" value="Genomic_DNA"/>
</dbReference>
<dbReference type="RefSeq" id="WP_000145974.1">
    <property type="nucleotide sequence ID" value="NC_011274.1"/>
</dbReference>
<dbReference type="SMR" id="B5REP5"/>
<dbReference type="KEGG" id="seg:SG3187"/>
<dbReference type="HOGENOM" id="CLU_009422_4_0_6"/>
<dbReference type="Proteomes" id="UP000008321">
    <property type="component" value="Chromosome"/>
</dbReference>
<dbReference type="GO" id="GO:0005737">
    <property type="term" value="C:cytoplasm"/>
    <property type="evidence" value="ECO:0007669"/>
    <property type="project" value="UniProtKB-SubCell"/>
</dbReference>
<dbReference type="GO" id="GO:0008650">
    <property type="term" value="F:rRNA (uridine-2'-O-)-methyltransferase activity"/>
    <property type="evidence" value="ECO:0007669"/>
    <property type="project" value="UniProtKB-UniRule"/>
</dbReference>
<dbReference type="CDD" id="cd02440">
    <property type="entry name" value="AdoMet_MTases"/>
    <property type="match status" value="1"/>
</dbReference>
<dbReference type="FunFam" id="3.40.50.150:FF:000005">
    <property type="entry name" value="Ribosomal RNA large subunit methyltransferase E"/>
    <property type="match status" value="1"/>
</dbReference>
<dbReference type="Gene3D" id="3.40.50.150">
    <property type="entry name" value="Vaccinia Virus protein VP39"/>
    <property type="match status" value="1"/>
</dbReference>
<dbReference type="HAMAP" id="MF_01547">
    <property type="entry name" value="RNA_methyltr_E"/>
    <property type="match status" value="1"/>
</dbReference>
<dbReference type="InterPro" id="IPR050082">
    <property type="entry name" value="RNA_methyltr_RlmE"/>
</dbReference>
<dbReference type="InterPro" id="IPR002877">
    <property type="entry name" value="RNA_MeTrfase_FtsJ_dom"/>
</dbReference>
<dbReference type="InterPro" id="IPR015507">
    <property type="entry name" value="rRNA-MeTfrase_E"/>
</dbReference>
<dbReference type="InterPro" id="IPR004512">
    <property type="entry name" value="rRNA_MeTrfase_gammaproteobac"/>
</dbReference>
<dbReference type="InterPro" id="IPR029063">
    <property type="entry name" value="SAM-dependent_MTases_sf"/>
</dbReference>
<dbReference type="NCBIfam" id="NF008390">
    <property type="entry name" value="PRK11188.1"/>
    <property type="match status" value="1"/>
</dbReference>
<dbReference type="NCBIfam" id="TIGR00438">
    <property type="entry name" value="rrmJ"/>
    <property type="match status" value="1"/>
</dbReference>
<dbReference type="PANTHER" id="PTHR10920">
    <property type="entry name" value="RIBOSOMAL RNA METHYLTRANSFERASE"/>
    <property type="match status" value="1"/>
</dbReference>
<dbReference type="PANTHER" id="PTHR10920:SF18">
    <property type="entry name" value="RRNA METHYLTRANSFERASE 2, MITOCHONDRIAL"/>
    <property type="match status" value="1"/>
</dbReference>
<dbReference type="Pfam" id="PF01728">
    <property type="entry name" value="FtsJ"/>
    <property type="match status" value="1"/>
</dbReference>
<dbReference type="PIRSF" id="PIRSF005461">
    <property type="entry name" value="23S_rRNA_mtase"/>
    <property type="match status" value="1"/>
</dbReference>
<dbReference type="SUPFAM" id="SSF53335">
    <property type="entry name" value="S-adenosyl-L-methionine-dependent methyltransferases"/>
    <property type="match status" value="1"/>
</dbReference>
<accession>B5REP5</accession>
<evidence type="ECO:0000255" key="1">
    <source>
        <dbReference type="HAMAP-Rule" id="MF_01547"/>
    </source>
</evidence>
<sequence length="208" mass="23238">MTGKKRSASSSRWLQEHFSDKYVQQAQKKGLRSRAWFKLDEIQQSDKLFKPGMTVVDLGAAPGGWSQYVVTQIGGKGRIIACDLLPMDPIVGVDFLQGDFRDELVMKALLERVGDSKVQVVMSDMAPNMSGTPAVDIPRAMYLVELALEMCRDVLAPGGSFVVKVFQGEGFDEYLREIRSLFTKVKVRKPDSSRARSREVYIVATGRK</sequence>
<protein>
    <recommendedName>
        <fullName evidence="1">Ribosomal RNA large subunit methyltransferase E</fullName>
        <ecNumber evidence="1">2.1.1.166</ecNumber>
    </recommendedName>
    <alternativeName>
        <fullName evidence="1">23S rRNA Um2552 methyltransferase</fullName>
    </alternativeName>
    <alternativeName>
        <fullName evidence="1">rRNA (uridine-2'-O-)-methyltransferase</fullName>
    </alternativeName>
</protein>
<organism>
    <name type="scientific">Salmonella gallinarum (strain 287/91 / NCTC 13346)</name>
    <dbReference type="NCBI Taxonomy" id="550538"/>
    <lineage>
        <taxon>Bacteria</taxon>
        <taxon>Pseudomonadati</taxon>
        <taxon>Pseudomonadota</taxon>
        <taxon>Gammaproteobacteria</taxon>
        <taxon>Enterobacterales</taxon>
        <taxon>Enterobacteriaceae</taxon>
        <taxon>Salmonella</taxon>
    </lineage>
</organism>
<reference key="1">
    <citation type="journal article" date="2008" name="Genome Res.">
        <title>Comparative genome analysis of Salmonella enteritidis PT4 and Salmonella gallinarum 287/91 provides insights into evolutionary and host adaptation pathways.</title>
        <authorList>
            <person name="Thomson N.R."/>
            <person name="Clayton D.J."/>
            <person name="Windhorst D."/>
            <person name="Vernikos G."/>
            <person name="Davidson S."/>
            <person name="Churcher C."/>
            <person name="Quail M.A."/>
            <person name="Stevens M."/>
            <person name="Jones M.A."/>
            <person name="Watson M."/>
            <person name="Barron A."/>
            <person name="Layton A."/>
            <person name="Pickard D."/>
            <person name="Kingsley R.A."/>
            <person name="Bignell A."/>
            <person name="Clark L."/>
            <person name="Harris B."/>
            <person name="Ormond D."/>
            <person name="Abdellah Z."/>
            <person name="Brooks K."/>
            <person name="Cherevach I."/>
            <person name="Chillingworth T."/>
            <person name="Woodward J."/>
            <person name="Norberczak H."/>
            <person name="Lord A."/>
            <person name="Arrowsmith C."/>
            <person name="Jagels K."/>
            <person name="Moule S."/>
            <person name="Mungall K."/>
            <person name="Saunders M."/>
            <person name="Whitehead S."/>
            <person name="Chabalgoity J.A."/>
            <person name="Maskell D."/>
            <person name="Humphreys T."/>
            <person name="Roberts M."/>
            <person name="Barrow P.A."/>
            <person name="Dougan G."/>
            <person name="Parkhill J."/>
        </authorList>
    </citation>
    <scope>NUCLEOTIDE SEQUENCE [LARGE SCALE GENOMIC DNA]</scope>
    <source>
        <strain>287/91 / NCTC 13346</strain>
    </source>
</reference>
<gene>
    <name evidence="1" type="primary">rlmE</name>
    <name evidence="1" type="synonym">ftsJ</name>
    <name evidence="1" type="synonym">rrmJ</name>
    <name type="ordered locus">SG3187</name>
</gene>